<feature type="peptide" id="PRO_0000419705" description="FMRFamide-like neuropeptide PGQDFMRF-amide" evidence="4">
    <location>
        <begin position="1"/>
        <end position="8"/>
    </location>
</feature>
<feature type="modified residue" description="Phenylalanine amide" evidence="4">
    <location>
        <position position="8"/>
    </location>
</feature>
<keyword id="KW-0027">Amidation</keyword>
<keyword id="KW-0903">Direct protein sequencing</keyword>
<keyword id="KW-0527">Neuropeptide</keyword>
<keyword id="KW-0964">Secreted</keyword>
<organism>
    <name type="scientific">Delia radicum</name>
    <name type="common">Cabbage root fly</name>
    <name type="synonym">Anthomyia brassicae</name>
    <dbReference type="NCBI Taxonomy" id="30064"/>
    <lineage>
        <taxon>Eukaryota</taxon>
        <taxon>Metazoa</taxon>
        <taxon>Ecdysozoa</taxon>
        <taxon>Arthropoda</taxon>
        <taxon>Hexapoda</taxon>
        <taxon>Insecta</taxon>
        <taxon>Pterygota</taxon>
        <taxon>Neoptera</taxon>
        <taxon>Endopterygota</taxon>
        <taxon>Diptera</taxon>
        <taxon>Brachycera</taxon>
        <taxon>Muscomorpha</taxon>
        <taxon>Muscoidea</taxon>
        <taxon>Anthomyiidae</taxon>
        <taxon>Anthomyiinae</taxon>
        <taxon>Delia</taxon>
    </lineage>
</organism>
<reference evidence="6" key="1">
    <citation type="journal article" date="2012" name="PLoS ONE">
        <title>Peptidomics of the agriculturally damaging larval stage of the cabbage root fly Delia radicum (Diptera: Anthomyiidae).</title>
        <authorList>
            <person name="Zoephel J."/>
            <person name="Reiher W."/>
            <person name="Rexer K.-H."/>
            <person name="Kahnt J."/>
            <person name="Wegener C."/>
        </authorList>
    </citation>
    <scope>PROTEIN SEQUENCE</scope>
    <scope>TISSUE SPECIFICITY</scope>
    <scope>DEVELOPMENTAL STAGE</scope>
    <scope>MASS SPECTROMETRY</scope>
    <scope>AMIDATION AT PHE-8</scope>
    <source>
        <tissue evidence="4">CNS</tissue>
    </source>
</reference>
<sequence length="8" mass="997">PGQDFMRF</sequence>
<accession>B3EWK1</accession>
<evidence type="ECO:0000250" key="1">
    <source>
        <dbReference type="UniProtKB" id="P41855"/>
    </source>
</evidence>
<evidence type="ECO:0000250" key="2">
    <source>
        <dbReference type="UniProtKB" id="P41860"/>
    </source>
</evidence>
<evidence type="ECO:0000255" key="3"/>
<evidence type="ECO:0000269" key="4">
    <source>
    </source>
</evidence>
<evidence type="ECO:0000303" key="5">
    <source>
    </source>
</evidence>
<evidence type="ECO:0000305" key="6"/>
<dbReference type="GO" id="GO:0005576">
    <property type="term" value="C:extracellular region"/>
    <property type="evidence" value="ECO:0007669"/>
    <property type="project" value="UniProtKB-SubCell"/>
</dbReference>
<dbReference type="GO" id="GO:0007218">
    <property type="term" value="P:neuropeptide signaling pathway"/>
    <property type="evidence" value="ECO:0007669"/>
    <property type="project" value="UniProtKB-KW"/>
</dbReference>
<protein>
    <recommendedName>
        <fullName evidence="5">FMRFamide-like neuropeptide PGQDFMRF-amide</fullName>
    </recommendedName>
</protein>
<proteinExistence type="evidence at protein level"/>
<comment type="function">
    <text evidence="1">FMRFamides and FMRFamide-like peptides are neuropeptides.</text>
</comment>
<comment type="subcellular location">
    <subcellularLocation>
        <location evidence="2">Secreted</location>
    </subcellularLocation>
</comment>
<comment type="tissue specificity">
    <text evidence="4">Expressed in the CNS and thoracic perisympathetic organs (tPSO) but not in the ring gland, midgut or abdominal perisympathetic organs (aPSO) (at protein level).</text>
</comment>
<comment type="developmental stage">
    <text evidence="4">Detected in larvae.</text>
</comment>
<comment type="mass spectrometry" mass="996.48" method="MALDI" evidence="4"/>
<comment type="similarity">
    <text evidence="3">Belongs to the FARP (FMRFamide related peptide) family.</text>
</comment>
<name>FAR5_DELRA</name>